<evidence type="ECO:0000255" key="1">
    <source>
        <dbReference type="HAMAP-Rule" id="MF_00022"/>
    </source>
</evidence>
<name>SYE2_WOLPP</name>
<comment type="function">
    <text evidence="1">Catalyzes the attachment of glutamate to tRNA(Glu) in a two-step reaction: glutamate is first activated by ATP to form Glu-AMP and then transferred to the acceptor end of tRNA(Glu).</text>
</comment>
<comment type="catalytic activity">
    <reaction evidence="1">
        <text>tRNA(Glu) + L-glutamate + ATP = L-glutamyl-tRNA(Glu) + AMP + diphosphate</text>
        <dbReference type="Rhea" id="RHEA:23540"/>
        <dbReference type="Rhea" id="RHEA-COMP:9663"/>
        <dbReference type="Rhea" id="RHEA-COMP:9680"/>
        <dbReference type="ChEBI" id="CHEBI:29985"/>
        <dbReference type="ChEBI" id="CHEBI:30616"/>
        <dbReference type="ChEBI" id="CHEBI:33019"/>
        <dbReference type="ChEBI" id="CHEBI:78442"/>
        <dbReference type="ChEBI" id="CHEBI:78520"/>
        <dbReference type="ChEBI" id="CHEBI:456215"/>
        <dbReference type="EC" id="6.1.1.17"/>
    </reaction>
</comment>
<comment type="subunit">
    <text evidence="1">Monomer.</text>
</comment>
<comment type="subcellular location">
    <subcellularLocation>
        <location evidence="1">Cytoplasm</location>
    </subcellularLocation>
</comment>
<comment type="similarity">
    <text evidence="1">Belongs to the class-I aminoacyl-tRNA synthetase family. Glutamate--tRNA ligase type 1 subfamily.</text>
</comment>
<proteinExistence type="inferred from homology"/>
<gene>
    <name evidence="1" type="primary">gltX2</name>
    <name type="ordered locus">WP0615</name>
</gene>
<organism>
    <name type="scientific">Wolbachia pipientis subsp. Culex pipiens (strain wPip)</name>
    <dbReference type="NCBI Taxonomy" id="570417"/>
    <lineage>
        <taxon>Bacteria</taxon>
        <taxon>Pseudomonadati</taxon>
        <taxon>Pseudomonadota</taxon>
        <taxon>Alphaproteobacteria</taxon>
        <taxon>Rickettsiales</taxon>
        <taxon>Anaplasmataceae</taxon>
        <taxon>Wolbachieae</taxon>
        <taxon>Wolbachia</taxon>
    </lineage>
</organism>
<protein>
    <recommendedName>
        <fullName evidence="1">Glutamate--tRNA ligase 2</fullName>
        <ecNumber evidence="1">6.1.1.17</ecNumber>
    </recommendedName>
    <alternativeName>
        <fullName evidence="1">Glutamyl-tRNA synthetase 2</fullName>
        <shortName evidence="1">GluRS 2</shortName>
    </alternativeName>
</protein>
<accession>B3CLF5</accession>
<sequence length="450" mass="51202">MPGIVTRFAPSPTGFLHIGGARTALFNWLYAQRHGGQFLLRIEDTDRKRSTQEAIDAIIDGLKWLGISYDGEIVYQSKRIDRHIEVANLLVEKGRAYHCYCPENEVAEKKIRAREEGKIYKHKCTHSTSNAEPVVRFKVPDSEDIVVDDKIYGQVTISSDQLDDIVILRSDNTPTYIFAVVVDDHDAGITDIIRGSDHLTNTFKQLLIYQALDFDVPRFAHVPLIHGEDGNKLSKRHGATSVCDYEKMGILPQAMRNYLLRLGWSHGNDEIISDEQAIEWFNLESIGRSPARLDFKKLEHLNNHYISNMSNEDILTLMLRENTLTDKKKGYLLQGLTELKKRANYLTELLDLAKFYIQVDLSEEAQQIVKSNLNVIKLLASFLSSVGSEDWNKNFLSSQIKEFSKLHNIKMSDIYHSLRAPITGIMDAPGIIDIMVILGKDECIKRLQAI</sequence>
<dbReference type="EC" id="6.1.1.17" evidence="1"/>
<dbReference type="EMBL" id="AM999887">
    <property type="protein sequence ID" value="CAQ54723.1"/>
    <property type="molecule type" value="Genomic_DNA"/>
</dbReference>
<dbReference type="SMR" id="B3CLF5"/>
<dbReference type="KEGG" id="wpi:WP0615"/>
<dbReference type="eggNOG" id="COG0008">
    <property type="taxonomic scope" value="Bacteria"/>
</dbReference>
<dbReference type="HOGENOM" id="CLU_015768_6_3_5"/>
<dbReference type="Proteomes" id="UP000008814">
    <property type="component" value="Chromosome"/>
</dbReference>
<dbReference type="GO" id="GO:0005829">
    <property type="term" value="C:cytosol"/>
    <property type="evidence" value="ECO:0007669"/>
    <property type="project" value="TreeGrafter"/>
</dbReference>
<dbReference type="GO" id="GO:0005524">
    <property type="term" value="F:ATP binding"/>
    <property type="evidence" value="ECO:0007669"/>
    <property type="project" value="UniProtKB-UniRule"/>
</dbReference>
<dbReference type="GO" id="GO:0004818">
    <property type="term" value="F:glutamate-tRNA ligase activity"/>
    <property type="evidence" value="ECO:0007669"/>
    <property type="project" value="UniProtKB-UniRule"/>
</dbReference>
<dbReference type="GO" id="GO:0000049">
    <property type="term" value="F:tRNA binding"/>
    <property type="evidence" value="ECO:0007669"/>
    <property type="project" value="InterPro"/>
</dbReference>
<dbReference type="GO" id="GO:0008270">
    <property type="term" value="F:zinc ion binding"/>
    <property type="evidence" value="ECO:0007669"/>
    <property type="project" value="UniProtKB-UniRule"/>
</dbReference>
<dbReference type="GO" id="GO:0006424">
    <property type="term" value="P:glutamyl-tRNA aminoacylation"/>
    <property type="evidence" value="ECO:0007669"/>
    <property type="project" value="UniProtKB-UniRule"/>
</dbReference>
<dbReference type="CDD" id="cd00808">
    <property type="entry name" value="GluRS_core"/>
    <property type="match status" value="1"/>
</dbReference>
<dbReference type="FunFam" id="3.40.50.620:FF:000007">
    <property type="entry name" value="Glutamate--tRNA ligase"/>
    <property type="match status" value="1"/>
</dbReference>
<dbReference type="Gene3D" id="1.10.10.350">
    <property type="match status" value="1"/>
</dbReference>
<dbReference type="Gene3D" id="3.40.50.620">
    <property type="entry name" value="HUPs"/>
    <property type="match status" value="1"/>
</dbReference>
<dbReference type="HAMAP" id="MF_00022">
    <property type="entry name" value="Glu_tRNA_synth_type1"/>
    <property type="match status" value="1"/>
</dbReference>
<dbReference type="InterPro" id="IPR045462">
    <property type="entry name" value="aa-tRNA-synth_I_cd-bd"/>
</dbReference>
<dbReference type="InterPro" id="IPR020751">
    <property type="entry name" value="aa-tRNA-synth_I_codon-bd_sub2"/>
</dbReference>
<dbReference type="InterPro" id="IPR001412">
    <property type="entry name" value="aa-tRNA-synth_I_CS"/>
</dbReference>
<dbReference type="InterPro" id="IPR008925">
    <property type="entry name" value="aa_tRNA-synth_I_cd-bd_sf"/>
</dbReference>
<dbReference type="InterPro" id="IPR004527">
    <property type="entry name" value="Glu-tRNA-ligase_bac/mito"/>
</dbReference>
<dbReference type="InterPro" id="IPR000924">
    <property type="entry name" value="Glu/Gln-tRNA-synth"/>
</dbReference>
<dbReference type="InterPro" id="IPR020058">
    <property type="entry name" value="Glu/Gln-tRNA-synth_Ib_cat-dom"/>
</dbReference>
<dbReference type="InterPro" id="IPR049940">
    <property type="entry name" value="GluQ/Sye"/>
</dbReference>
<dbReference type="InterPro" id="IPR033910">
    <property type="entry name" value="GluRS_core"/>
</dbReference>
<dbReference type="InterPro" id="IPR014729">
    <property type="entry name" value="Rossmann-like_a/b/a_fold"/>
</dbReference>
<dbReference type="NCBIfam" id="TIGR00464">
    <property type="entry name" value="gltX_bact"/>
    <property type="match status" value="1"/>
</dbReference>
<dbReference type="PANTHER" id="PTHR43311">
    <property type="entry name" value="GLUTAMATE--TRNA LIGASE"/>
    <property type="match status" value="1"/>
</dbReference>
<dbReference type="PANTHER" id="PTHR43311:SF2">
    <property type="entry name" value="GLUTAMATE--TRNA LIGASE, MITOCHONDRIAL-RELATED"/>
    <property type="match status" value="1"/>
</dbReference>
<dbReference type="Pfam" id="PF19269">
    <property type="entry name" value="Anticodon_2"/>
    <property type="match status" value="1"/>
</dbReference>
<dbReference type="Pfam" id="PF00749">
    <property type="entry name" value="tRNA-synt_1c"/>
    <property type="match status" value="1"/>
</dbReference>
<dbReference type="PRINTS" id="PR00987">
    <property type="entry name" value="TRNASYNTHGLU"/>
</dbReference>
<dbReference type="SUPFAM" id="SSF48163">
    <property type="entry name" value="An anticodon-binding domain of class I aminoacyl-tRNA synthetases"/>
    <property type="match status" value="1"/>
</dbReference>
<dbReference type="SUPFAM" id="SSF52374">
    <property type="entry name" value="Nucleotidylyl transferase"/>
    <property type="match status" value="1"/>
</dbReference>
<dbReference type="PROSITE" id="PS00178">
    <property type="entry name" value="AA_TRNA_LIGASE_I"/>
    <property type="match status" value="1"/>
</dbReference>
<reference key="1">
    <citation type="journal article" date="2008" name="Mol. Biol. Evol.">
        <title>Genome evolution of Wolbachia strain wPip from the Culex pipiens group.</title>
        <authorList>
            <person name="Klasson L."/>
            <person name="Walker T."/>
            <person name="Sebaihia M."/>
            <person name="Sanders M.J."/>
            <person name="Quail M.A."/>
            <person name="Lord A."/>
            <person name="Sanders S."/>
            <person name="Earl J."/>
            <person name="O'Neill S.L."/>
            <person name="Thomson N."/>
            <person name="Sinkins S.P."/>
            <person name="Parkhill J."/>
        </authorList>
    </citation>
    <scope>NUCLEOTIDE SEQUENCE [LARGE SCALE GENOMIC DNA]</scope>
    <source>
        <strain>wPip</strain>
    </source>
</reference>
<feature type="chain" id="PRO_0000367795" description="Glutamate--tRNA ligase 2">
    <location>
        <begin position="1"/>
        <end position="450"/>
    </location>
</feature>
<feature type="short sequence motif" description="'HIGH' region" evidence="1">
    <location>
        <begin position="10"/>
        <end position="20"/>
    </location>
</feature>
<feature type="short sequence motif" description="'KMSKS' region" evidence="1">
    <location>
        <begin position="232"/>
        <end position="236"/>
    </location>
</feature>
<feature type="binding site" evidence="1">
    <location>
        <position position="235"/>
    </location>
    <ligand>
        <name>ATP</name>
        <dbReference type="ChEBI" id="CHEBI:30616"/>
    </ligand>
</feature>
<keyword id="KW-0030">Aminoacyl-tRNA synthetase</keyword>
<keyword id="KW-0067">ATP-binding</keyword>
<keyword id="KW-0963">Cytoplasm</keyword>
<keyword id="KW-0436">Ligase</keyword>
<keyword id="KW-0547">Nucleotide-binding</keyword>
<keyword id="KW-0648">Protein biosynthesis</keyword>